<feature type="chain" id="PRO_0000060769" description="Cytochrome b">
    <location>
        <begin position="1"/>
        <end position="398"/>
    </location>
</feature>
<feature type="transmembrane region" description="Helical" evidence="2">
    <location>
        <begin position="33"/>
        <end position="53"/>
    </location>
</feature>
<feature type="transmembrane region" description="Helical" evidence="2">
    <location>
        <begin position="77"/>
        <end position="98"/>
    </location>
</feature>
<feature type="transmembrane region" description="Helical" evidence="2">
    <location>
        <begin position="113"/>
        <end position="133"/>
    </location>
</feature>
<feature type="transmembrane region" description="Helical" evidence="2">
    <location>
        <begin position="178"/>
        <end position="198"/>
    </location>
</feature>
<feature type="transmembrane region" description="Helical" evidence="2">
    <location>
        <begin position="226"/>
        <end position="246"/>
    </location>
</feature>
<feature type="transmembrane region" description="Helical" evidence="2">
    <location>
        <begin position="288"/>
        <end position="308"/>
    </location>
</feature>
<feature type="transmembrane region" description="Helical" evidence="2">
    <location>
        <begin position="320"/>
        <end position="340"/>
    </location>
</feature>
<feature type="transmembrane region" description="Helical" evidence="2">
    <location>
        <begin position="347"/>
        <end position="367"/>
    </location>
</feature>
<feature type="binding site" description="axial binding residue" evidence="2">
    <location>
        <position position="83"/>
    </location>
    <ligand>
        <name>heme b</name>
        <dbReference type="ChEBI" id="CHEBI:60344"/>
        <label>b562</label>
    </ligand>
    <ligandPart>
        <name>Fe</name>
        <dbReference type="ChEBI" id="CHEBI:18248"/>
    </ligandPart>
</feature>
<feature type="binding site" description="axial binding residue" evidence="2">
    <location>
        <position position="97"/>
    </location>
    <ligand>
        <name>heme b</name>
        <dbReference type="ChEBI" id="CHEBI:60344"/>
        <label>b566</label>
    </ligand>
    <ligandPart>
        <name>Fe</name>
        <dbReference type="ChEBI" id="CHEBI:18248"/>
    </ligandPart>
</feature>
<feature type="binding site" description="axial binding residue" evidence="2">
    <location>
        <position position="182"/>
    </location>
    <ligand>
        <name>heme b</name>
        <dbReference type="ChEBI" id="CHEBI:60344"/>
        <label>b562</label>
    </ligand>
    <ligandPart>
        <name>Fe</name>
        <dbReference type="ChEBI" id="CHEBI:18248"/>
    </ligandPart>
</feature>
<feature type="binding site" description="axial binding residue" evidence="2">
    <location>
        <position position="196"/>
    </location>
    <ligand>
        <name>heme b</name>
        <dbReference type="ChEBI" id="CHEBI:60344"/>
        <label>b566</label>
    </ligand>
    <ligandPart>
        <name>Fe</name>
        <dbReference type="ChEBI" id="CHEBI:18248"/>
    </ligandPart>
</feature>
<feature type="binding site" evidence="2">
    <location>
        <position position="201"/>
    </location>
    <ligand>
        <name>a ubiquinone</name>
        <dbReference type="ChEBI" id="CHEBI:16389"/>
    </ligand>
</feature>
<gene>
    <name type="primary">mt-cyb</name>
    <name type="synonym">cob</name>
    <name type="synonym">cytb</name>
    <name type="synonym">mtcyb</name>
</gene>
<protein>
    <recommendedName>
        <fullName>Cytochrome b</fullName>
    </recommendedName>
    <alternativeName>
        <fullName>Complex III subunit 3</fullName>
    </alternativeName>
    <alternativeName>
        <fullName>Complex III subunit III</fullName>
    </alternativeName>
    <alternativeName>
        <fullName>Cytochrome b-c1 complex subunit 3</fullName>
    </alternativeName>
    <alternativeName>
        <fullName>Ubiquinol-cytochrome-c reductase complex cytochrome b subunit</fullName>
    </alternativeName>
</protein>
<dbReference type="EMBL" id="AF480933">
    <property type="protein sequence ID" value="AAL91940.1"/>
    <property type="molecule type" value="Genomic_DNA"/>
</dbReference>
<dbReference type="SMR" id="Q8SGA0"/>
<dbReference type="GO" id="GO:0005743">
    <property type="term" value="C:mitochondrial inner membrane"/>
    <property type="evidence" value="ECO:0007669"/>
    <property type="project" value="UniProtKB-SubCell"/>
</dbReference>
<dbReference type="GO" id="GO:0045275">
    <property type="term" value="C:respiratory chain complex III"/>
    <property type="evidence" value="ECO:0007669"/>
    <property type="project" value="InterPro"/>
</dbReference>
<dbReference type="GO" id="GO:0046872">
    <property type="term" value="F:metal ion binding"/>
    <property type="evidence" value="ECO:0007669"/>
    <property type="project" value="UniProtKB-KW"/>
</dbReference>
<dbReference type="GO" id="GO:0008121">
    <property type="term" value="F:ubiquinol-cytochrome-c reductase activity"/>
    <property type="evidence" value="ECO:0007669"/>
    <property type="project" value="InterPro"/>
</dbReference>
<dbReference type="GO" id="GO:0006122">
    <property type="term" value="P:mitochondrial electron transport, ubiquinol to cytochrome c"/>
    <property type="evidence" value="ECO:0007669"/>
    <property type="project" value="TreeGrafter"/>
</dbReference>
<dbReference type="CDD" id="cd00290">
    <property type="entry name" value="cytochrome_b_C"/>
    <property type="match status" value="1"/>
</dbReference>
<dbReference type="CDD" id="cd00284">
    <property type="entry name" value="Cytochrome_b_N"/>
    <property type="match status" value="1"/>
</dbReference>
<dbReference type="FunFam" id="1.20.810.10:FF:000002">
    <property type="entry name" value="Cytochrome b"/>
    <property type="match status" value="1"/>
</dbReference>
<dbReference type="Gene3D" id="1.20.810.10">
    <property type="entry name" value="Cytochrome Bc1 Complex, Chain C"/>
    <property type="match status" value="1"/>
</dbReference>
<dbReference type="InterPro" id="IPR005798">
    <property type="entry name" value="Cyt_b/b6_C"/>
</dbReference>
<dbReference type="InterPro" id="IPR036150">
    <property type="entry name" value="Cyt_b/b6_C_sf"/>
</dbReference>
<dbReference type="InterPro" id="IPR005797">
    <property type="entry name" value="Cyt_b/b6_N"/>
</dbReference>
<dbReference type="InterPro" id="IPR027387">
    <property type="entry name" value="Cytb/b6-like_sf"/>
</dbReference>
<dbReference type="InterPro" id="IPR030689">
    <property type="entry name" value="Cytochrome_b"/>
</dbReference>
<dbReference type="InterPro" id="IPR048260">
    <property type="entry name" value="Cytochrome_b_C_euk/bac"/>
</dbReference>
<dbReference type="InterPro" id="IPR048259">
    <property type="entry name" value="Cytochrome_b_N_euk/bac"/>
</dbReference>
<dbReference type="InterPro" id="IPR016174">
    <property type="entry name" value="Di-haem_cyt_TM"/>
</dbReference>
<dbReference type="PANTHER" id="PTHR19271">
    <property type="entry name" value="CYTOCHROME B"/>
    <property type="match status" value="1"/>
</dbReference>
<dbReference type="PANTHER" id="PTHR19271:SF16">
    <property type="entry name" value="CYTOCHROME B"/>
    <property type="match status" value="1"/>
</dbReference>
<dbReference type="Pfam" id="PF00032">
    <property type="entry name" value="Cytochrom_B_C"/>
    <property type="match status" value="1"/>
</dbReference>
<dbReference type="Pfam" id="PF00033">
    <property type="entry name" value="Cytochrome_B"/>
    <property type="match status" value="1"/>
</dbReference>
<dbReference type="PIRSF" id="PIRSF038885">
    <property type="entry name" value="COB"/>
    <property type="match status" value="1"/>
</dbReference>
<dbReference type="SUPFAM" id="SSF81648">
    <property type="entry name" value="a domain/subunit of cytochrome bc1 complex (Ubiquinol-cytochrome c reductase)"/>
    <property type="match status" value="1"/>
</dbReference>
<dbReference type="SUPFAM" id="SSF81342">
    <property type="entry name" value="Transmembrane di-heme cytochromes"/>
    <property type="match status" value="1"/>
</dbReference>
<dbReference type="PROSITE" id="PS51003">
    <property type="entry name" value="CYTB_CTER"/>
    <property type="match status" value="1"/>
</dbReference>
<dbReference type="PROSITE" id="PS51002">
    <property type="entry name" value="CYTB_NTER"/>
    <property type="match status" value="1"/>
</dbReference>
<geneLocation type="mitochondrion"/>
<accession>Q8SGA0</accession>
<comment type="function">
    <text evidence="2">Component of the ubiquinol-cytochrome c reductase complex (complex III or cytochrome b-c1 complex) that is part of the mitochondrial respiratory chain. The b-c1 complex mediates electron transfer from ubiquinol to cytochrome c. Contributes to the generation of a proton gradient across the mitochondrial membrane that is then used for ATP synthesis.</text>
</comment>
<comment type="cofactor">
    <cofactor evidence="2">
        <name>heme b</name>
        <dbReference type="ChEBI" id="CHEBI:60344"/>
    </cofactor>
    <text evidence="2">Binds 2 heme b groups non-covalently.</text>
</comment>
<comment type="subunit">
    <text evidence="2">The cytochrome bc1 complex contains 3 respiratory subunits (MT-CYB, CYC1 and UQCRFS1), 2 core proteins (UQCRC1 and UQCRC2) and probably 6 low-molecular weight proteins.</text>
</comment>
<comment type="subcellular location">
    <subcellularLocation>
        <location evidence="2">Mitochondrion inner membrane</location>
        <topology evidence="2">Multi-pass membrane protein</topology>
    </subcellularLocation>
</comment>
<comment type="miscellaneous">
    <text evidence="1">Heme 1 (or BL or b562) is low-potential and absorbs at about 562 nm, and heme 2 (or BH or b566) is high-potential and absorbs at about 566 nm.</text>
</comment>
<comment type="similarity">
    <text evidence="3 4">Belongs to the cytochrome b family.</text>
</comment>
<comment type="caution">
    <text evidence="2">The full-length protein contains only eight transmembrane helices, not nine as predicted by bioinformatics tools.</text>
</comment>
<organism>
    <name type="scientific">Channa asiatica</name>
    <name type="common">Small snakehead</name>
    <name type="synonym">Gymnotus asiaticus</name>
    <dbReference type="NCBI Taxonomy" id="188929"/>
    <lineage>
        <taxon>Eukaryota</taxon>
        <taxon>Metazoa</taxon>
        <taxon>Chordata</taxon>
        <taxon>Craniata</taxon>
        <taxon>Vertebrata</taxon>
        <taxon>Euteleostomi</taxon>
        <taxon>Actinopterygii</taxon>
        <taxon>Neopterygii</taxon>
        <taxon>Teleostei</taxon>
        <taxon>Neoteleostei</taxon>
        <taxon>Acanthomorphata</taxon>
        <taxon>Anabantaria</taxon>
        <taxon>Anabantiformes</taxon>
        <taxon>Channoidei</taxon>
        <taxon>Channidae</taxon>
        <taxon>Channa</taxon>
    </lineage>
</organism>
<keyword id="KW-0249">Electron transport</keyword>
<keyword id="KW-0349">Heme</keyword>
<keyword id="KW-0408">Iron</keyword>
<keyword id="KW-0472">Membrane</keyword>
<keyword id="KW-0479">Metal-binding</keyword>
<keyword id="KW-0496">Mitochondrion</keyword>
<keyword id="KW-0999">Mitochondrion inner membrane</keyword>
<keyword id="KW-0679">Respiratory chain</keyword>
<keyword id="KW-0812">Transmembrane</keyword>
<keyword id="KW-1133">Transmembrane helix</keyword>
<keyword id="KW-0813">Transport</keyword>
<keyword id="KW-0830">Ubiquinone</keyword>
<proteinExistence type="inferred from homology"/>
<name>CYB_CHAAI</name>
<sequence>MANLRKTHPLLKIANDALVDLPTPTSISAWWNFGSLLGLCLVAQIITGLFLAMHYTADITTAFSSVAHICRDVNYGWLIRNLHANGASFFFICVYLHIGRGLYYGSYLYKETWNIGVILLLLVMMTAFVGYVLPWGQMSFWGATVITNLLSAVPYVGNMLVEWIWGGFSVDNATLTRFFAFHFLFPFLIAAFTIIHLLFLHETGSTNPVGLNSDADKIPFHPYFSYKDLLGFAILLIALISLSLFAPNLLGDPDNFTPANPLVTPPHIKPEWYFLFAYAILRSIPNKLGGVLALLASILILMLVPILHTSKQRSLTFRPFTQLLFWLLVADVIILTWIGGLPVEHPYVVIGQIASFLYFFLFLFLIPLSGWLENKALKWSCIDSSASERRSCKPDVGG</sequence>
<evidence type="ECO:0000250" key="1"/>
<evidence type="ECO:0000250" key="2">
    <source>
        <dbReference type="UniProtKB" id="P00157"/>
    </source>
</evidence>
<evidence type="ECO:0000255" key="3">
    <source>
        <dbReference type="PROSITE-ProRule" id="PRU00967"/>
    </source>
</evidence>
<evidence type="ECO:0000255" key="4">
    <source>
        <dbReference type="PROSITE-ProRule" id="PRU00968"/>
    </source>
</evidence>
<reference key="1">
    <citation type="submission" date="2002-02" db="EMBL/GenBank/DDBJ databases">
        <authorList>
            <person name="Bai J."/>
            <person name="Lao H."/>
            <person name="Ye X."/>
            <person name="Jian Q."/>
            <person name="Luo J."/>
        </authorList>
    </citation>
    <scope>NUCLEOTIDE SEQUENCE [GENOMIC DNA]</scope>
</reference>